<dbReference type="EMBL" id="CP000746">
    <property type="protein sequence ID" value="ABR75143.1"/>
    <property type="molecule type" value="Genomic_DNA"/>
</dbReference>
<dbReference type="RefSeq" id="WP_012073520.1">
    <property type="nucleotide sequence ID" value="NC_009655.1"/>
</dbReference>
<dbReference type="SMR" id="A6VQ96"/>
<dbReference type="STRING" id="339671.Asuc_1791"/>
<dbReference type="KEGG" id="asu:Asuc_1791"/>
<dbReference type="eggNOG" id="COG0823">
    <property type="taxonomic scope" value="Bacteria"/>
</dbReference>
<dbReference type="HOGENOM" id="CLU_047123_0_0_6"/>
<dbReference type="OrthoDB" id="9802240at2"/>
<dbReference type="Proteomes" id="UP000001114">
    <property type="component" value="Chromosome"/>
</dbReference>
<dbReference type="GO" id="GO:0042597">
    <property type="term" value="C:periplasmic space"/>
    <property type="evidence" value="ECO:0007669"/>
    <property type="project" value="UniProtKB-SubCell"/>
</dbReference>
<dbReference type="GO" id="GO:0051301">
    <property type="term" value="P:cell division"/>
    <property type="evidence" value="ECO:0007669"/>
    <property type="project" value="UniProtKB-UniRule"/>
</dbReference>
<dbReference type="GO" id="GO:0017038">
    <property type="term" value="P:protein import"/>
    <property type="evidence" value="ECO:0007669"/>
    <property type="project" value="InterPro"/>
</dbReference>
<dbReference type="Gene3D" id="2.120.10.30">
    <property type="entry name" value="TolB, C-terminal domain"/>
    <property type="match status" value="1"/>
</dbReference>
<dbReference type="Gene3D" id="3.40.50.10070">
    <property type="entry name" value="TolB, N-terminal domain"/>
    <property type="match status" value="1"/>
</dbReference>
<dbReference type="HAMAP" id="MF_00671">
    <property type="entry name" value="TolB"/>
    <property type="match status" value="1"/>
</dbReference>
<dbReference type="InterPro" id="IPR011042">
    <property type="entry name" value="6-blade_b-propeller_TolB-like"/>
</dbReference>
<dbReference type="InterPro" id="IPR011659">
    <property type="entry name" value="PD40"/>
</dbReference>
<dbReference type="InterPro" id="IPR014167">
    <property type="entry name" value="Tol-Pal_TolB"/>
</dbReference>
<dbReference type="InterPro" id="IPR007195">
    <property type="entry name" value="TolB_N"/>
</dbReference>
<dbReference type="NCBIfam" id="TIGR02800">
    <property type="entry name" value="propeller_TolB"/>
    <property type="match status" value="1"/>
</dbReference>
<dbReference type="PANTHER" id="PTHR36842:SF1">
    <property type="entry name" value="PROTEIN TOLB"/>
    <property type="match status" value="1"/>
</dbReference>
<dbReference type="PANTHER" id="PTHR36842">
    <property type="entry name" value="PROTEIN TOLB HOMOLOG"/>
    <property type="match status" value="1"/>
</dbReference>
<dbReference type="Pfam" id="PF07676">
    <property type="entry name" value="PD40"/>
    <property type="match status" value="4"/>
</dbReference>
<dbReference type="Pfam" id="PF04052">
    <property type="entry name" value="TolB_N"/>
    <property type="match status" value="1"/>
</dbReference>
<dbReference type="SUPFAM" id="SSF52964">
    <property type="entry name" value="TolB, N-terminal domain"/>
    <property type="match status" value="1"/>
</dbReference>
<dbReference type="SUPFAM" id="SSF69304">
    <property type="entry name" value="Tricorn protease N-terminal domain"/>
    <property type="match status" value="1"/>
</dbReference>
<accession>A6VQ96</accession>
<organism>
    <name type="scientific">Actinobacillus succinogenes (strain ATCC 55618 / DSM 22257 / CCUG 43843 / 130Z)</name>
    <dbReference type="NCBI Taxonomy" id="339671"/>
    <lineage>
        <taxon>Bacteria</taxon>
        <taxon>Pseudomonadati</taxon>
        <taxon>Pseudomonadota</taxon>
        <taxon>Gammaproteobacteria</taxon>
        <taxon>Pasteurellales</taxon>
        <taxon>Pasteurellaceae</taxon>
        <taxon>Actinobacillus</taxon>
    </lineage>
</organism>
<evidence type="ECO:0000255" key="1">
    <source>
        <dbReference type="HAMAP-Rule" id="MF_00671"/>
    </source>
</evidence>
<keyword id="KW-0131">Cell cycle</keyword>
<keyword id="KW-0132">Cell division</keyword>
<keyword id="KW-0574">Periplasm</keyword>
<keyword id="KW-1185">Reference proteome</keyword>
<keyword id="KW-0732">Signal</keyword>
<gene>
    <name evidence="1" type="primary">tolB</name>
    <name type="ordered locus">Asuc_1791</name>
</gene>
<feature type="signal peptide" evidence="1">
    <location>
        <begin position="1"/>
        <end position="23"/>
    </location>
</feature>
<feature type="chain" id="PRO_5000258964" description="Tol-Pal system protein TolB" evidence="1">
    <location>
        <begin position="24"/>
        <end position="427"/>
    </location>
</feature>
<comment type="function">
    <text evidence="1">Part of the Tol-Pal system, which plays a role in outer membrane invagination during cell division and is important for maintaining outer membrane integrity.</text>
</comment>
<comment type="subunit">
    <text evidence="1">The Tol-Pal system is composed of five core proteins: the inner membrane proteins TolA, TolQ and TolR, the periplasmic protein TolB and the outer membrane protein Pal. They form a network linking the inner and outer membranes and the peptidoglycan layer.</text>
</comment>
<comment type="subcellular location">
    <subcellularLocation>
        <location evidence="1">Periplasm</location>
    </subcellularLocation>
</comment>
<comment type="similarity">
    <text evidence="1">Belongs to the TolB family.</text>
</comment>
<protein>
    <recommendedName>
        <fullName evidence="1">Tol-Pal system protein TolB</fullName>
    </recommendedName>
</protein>
<proteinExistence type="inferred from homology"/>
<sequence length="427" mass="45299">MKLIARLMSMCAVLFFAINSAYADDEVRIVIDEGVEGARPIAVVPFKSNGSVPADIAEIITADLRNSGKFNPIPVNQMPQQPGSASEVTPDAWASLGIDAVVVGQVTASGNGYQIAYQLVDTVGASGNAGAVLAQNSLTVQPKWIRWGAHQVSDEVFEKMTGIKGAFRTRIAYVVQRNAGSHELRIADYDGFNQFVVTRSSQPIMSPAWSPDGQRLAYVSFENRKSQLVVHNLGSGQRKVVAAFRGHNGAPAFSPDGSRLAFANNQDGLLNIYVMNSNGGHPTKLTGGAGNNTEPSWTQDGRILFTSDRSGSPQVYSMSSSGGGATLIGGGRSYSGQMSSDGKTLVMISGDNVVKYDTTTGTSEVLSSTFLDESPSISPNGIMIIYSSTQGLGKVLQLVSADGRFKARLPGSDGQVKFPAWSPYLTK</sequence>
<name>TOLB_ACTSZ</name>
<reference key="1">
    <citation type="journal article" date="2010" name="BMC Genomics">
        <title>A genomic perspective on the potential of Actinobacillus succinogenes for industrial succinate production.</title>
        <authorList>
            <person name="McKinlay J.B."/>
            <person name="Laivenieks M."/>
            <person name="Schindler B.D."/>
            <person name="McKinlay A.A."/>
            <person name="Siddaramappa S."/>
            <person name="Challacombe J.F."/>
            <person name="Lowry S.R."/>
            <person name="Clum A."/>
            <person name="Lapidus A.L."/>
            <person name="Burkhart K.B."/>
            <person name="Harkins V."/>
            <person name="Vieille C."/>
        </authorList>
    </citation>
    <scope>NUCLEOTIDE SEQUENCE [LARGE SCALE GENOMIC DNA]</scope>
    <source>
        <strain>ATCC 55618 / DSM 22257 / CCUG 43843 / 130Z</strain>
    </source>
</reference>